<keyword id="KW-0687">Ribonucleoprotein</keyword>
<keyword id="KW-0689">Ribosomal protein</keyword>
<proteinExistence type="inferred from homology"/>
<reference key="1">
    <citation type="journal article" date="2009" name="Science">
        <title>The dynamics and time scale of ongoing genomic erosion in symbiotic bacteria.</title>
        <authorList>
            <person name="Moran N.A."/>
            <person name="McLaughlin H.J."/>
            <person name="Sorek R."/>
        </authorList>
    </citation>
    <scope>NUCLEOTIDE SEQUENCE [LARGE SCALE GENOMIC DNA]</scope>
    <source>
        <strain>Tuc7</strain>
    </source>
</reference>
<dbReference type="EMBL" id="CP001158">
    <property type="protein sequence ID" value="ACL30296.1"/>
    <property type="molecule type" value="Genomic_DNA"/>
</dbReference>
<dbReference type="RefSeq" id="WP_009874457.1">
    <property type="nucleotide sequence ID" value="NC_011834.1"/>
</dbReference>
<dbReference type="SMR" id="B8D831"/>
<dbReference type="KEGG" id="bau:BUAPTUC7_500"/>
<dbReference type="HOGENOM" id="CLU_131047_1_4_6"/>
<dbReference type="GO" id="GO:0022625">
    <property type="term" value="C:cytosolic large ribosomal subunit"/>
    <property type="evidence" value="ECO:0007669"/>
    <property type="project" value="TreeGrafter"/>
</dbReference>
<dbReference type="GO" id="GO:0003735">
    <property type="term" value="F:structural constituent of ribosome"/>
    <property type="evidence" value="ECO:0007669"/>
    <property type="project" value="InterPro"/>
</dbReference>
<dbReference type="GO" id="GO:0006412">
    <property type="term" value="P:translation"/>
    <property type="evidence" value="ECO:0007669"/>
    <property type="project" value="UniProtKB-UniRule"/>
</dbReference>
<dbReference type="CDD" id="cd01658">
    <property type="entry name" value="Ribosomal_L30"/>
    <property type="match status" value="1"/>
</dbReference>
<dbReference type="FunFam" id="3.30.1390.20:FF:000001">
    <property type="entry name" value="50S ribosomal protein L30"/>
    <property type="match status" value="1"/>
</dbReference>
<dbReference type="Gene3D" id="3.30.1390.20">
    <property type="entry name" value="Ribosomal protein L30, ferredoxin-like fold domain"/>
    <property type="match status" value="1"/>
</dbReference>
<dbReference type="HAMAP" id="MF_01371_B">
    <property type="entry name" value="Ribosomal_uL30_B"/>
    <property type="match status" value="1"/>
</dbReference>
<dbReference type="InterPro" id="IPR036919">
    <property type="entry name" value="Ribo_uL30_ferredoxin-like_sf"/>
</dbReference>
<dbReference type="InterPro" id="IPR005996">
    <property type="entry name" value="Ribosomal_uL30_bac-type"/>
</dbReference>
<dbReference type="InterPro" id="IPR016082">
    <property type="entry name" value="Ribosomal_uL30_ferredoxin-like"/>
</dbReference>
<dbReference type="NCBIfam" id="TIGR01308">
    <property type="entry name" value="rpmD_bact"/>
    <property type="match status" value="1"/>
</dbReference>
<dbReference type="PANTHER" id="PTHR15892:SF2">
    <property type="entry name" value="LARGE RIBOSOMAL SUBUNIT PROTEIN UL30M"/>
    <property type="match status" value="1"/>
</dbReference>
<dbReference type="PANTHER" id="PTHR15892">
    <property type="entry name" value="MITOCHONDRIAL RIBOSOMAL PROTEIN L30"/>
    <property type="match status" value="1"/>
</dbReference>
<dbReference type="Pfam" id="PF00327">
    <property type="entry name" value="Ribosomal_L30"/>
    <property type="match status" value="1"/>
</dbReference>
<dbReference type="PIRSF" id="PIRSF002211">
    <property type="entry name" value="Ribosomal_L30_bac-type"/>
    <property type="match status" value="1"/>
</dbReference>
<dbReference type="SUPFAM" id="SSF55129">
    <property type="entry name" value="Ribosomal protein L30p/L7e"/>
    <property type="match status" value="1"/>
</dbReference>
<sequence>MKNIKITQIKSAIGRLPKHKKTLIGLGLRYIGHTVIREDTPSIQGMVKKISYILKIQEE</sequence>
<comment type="subunit">
    <text evidence="1">Part of the 50S ribosomal subunit.</text>
</comment>
<comment type="similarity">
    <text evidence="1">Belongs to the universal ribosomal protein uL30 family.</text>
</comment>
<accession>B8D831</accession>
<gene>
    <name evidence="1" type="primary">rpmD</name>
    <name type="ordered locus">BUAPTUC7_500</name>
</gene>
<feature type="chain" id="PRO_1000184131" description="Large ribosomal subunit protein uL30">
    <location>
        <begin position="1"/>
        <end position="59"/>
    </location>
</feature>
<organism>
    <name type="scientific">Buchnera aphidicola subsp. Acyrthosiphon pisum (strain Tuc7)</name>
    <dbReference type="NCBI Taxonomy" id="561501"/>
    <lineage>
        <taxon>Bacteria</taxon>
        <taxon>Pseudomonadati</taxon>
        <taxon>Pseudomonadota</taxon>
        <taxon>Gammaproteobacteria</taxon>
        <taxon>Enterobacterales</taxon>
        <taxon>Erwiniaceae</taxon>
        <taxon>Buchnera</taxon>
    </lineage>
</organism>
<evidence type="ECO:0000255" key="1">
    <source>
        <dbReference type="HAMAP-Rule" id="MF_01371"/>
    </source>
</evidence>
<evidence type="ECO:0000305" key="2"/>
<protein>
    <recommendedName>
        <fullName evidence="1">Large ribosomal subunit protein uL30</fullName>
    </recommendedName>
    <alternativeName>
        <fullName evidence="2">50S ribosomal protein L30</fullName>
    </alternativeName>
</protein>
<name>RL30_BUCAT</name>